<name>GET3_ASPNC</name>
<sequence length="341" mass="37563">MSSAVVHSDDLMEPTLQSVVNQKTLRWIFVGGKGGVGKTTTSCSLAIQLAKVRKSVLLISTDPAHNLSDAFGQKFGKEARLVDGYTNLSAMEIDPNGSIQDLLASGEGQGDDPLSGMGVGGMMQDLAFSIPGVDEAMSFAEVLKQVKSLSYEVIVFDTAPTGHTLRFLQFPTVLEKALAKLSQLSSQFGPMLNSILGSRGGLPGGQNIDELLQKMESLRETISEVNSQFKDADLTTFVCVCIAEFLSLYETERMIQELTSYNIDTHAIVVNQLLFPKQSSECEQCNARRKMQKKYLEQIEELYEDFNVVRMPLLVEEVRGKEKLEKFSDMLVNPYVPPEGN</sequence>
<keyword id="KW-0067">ATP-binding</keyword>
<keyword id="KW-0963">Cytoplasm</keyword>
<keyword id="KW-0256">Endoplasmic reticulum</keyword>
<keyword id="KW-0378">Hydrolase</keyword>
<keyword id="KW-0479">Metal-binding</keyword>
<keyword id="KW-0547">Nucleotide-binding</keyword>
<keyword id="KW-1185">Reference proteome</keyword>
<keyword id="KW-0813">Transport</keyword>
<keyword id="KW-0862">Zinc</keyword>
<gene>
    <name type="primary">get3</name>
    <name type="ORF">An02g07090</name>
</gene>
<accession>A5AAA1</accession>
<dbReference type="EC" id="3.6.-.-" evidence="1"/>
<dbReference type="EMBL" id="AM270015">
    <property type="protein sequence ID" value="CAK44253.1"/>
    <property type="molecule type" value="Genomic_DNA"/>
</dbReference>
<dbReference type="RefSeq" id="XP_001399843.1">
    <property type="nucleotide sequence ID" value="XM_001399806.2"/>
</dbReference>
<dbReference type="SMR" id="A5AAA1"/>
<dbReference type="EnsemblFungi" id="CAK44253">
    <property type="protein sequence ID" value="CAK44253"/>
    <property type="gene ID" value="An02g07090"/>
</dbReference>
<dbReference type="GeneID" id="4979198"/>
<dbReference type="KEGG" id="ang:An02g07090"/>
<dbReference type="VEuPathDB" id="FungiDB:An02g07090"/>
<dbReference type="HOGENOM" id="CLU_040761_0_0_1"/>
<dbReference type="Proteomes" id="UP000006706">
    <property type="component" value="Chromosome 4R"/>
</dbReference>
<dbReference type="GO" id="GO:0043529">
    <property type="term" value="C:GET complex"/>
    <property type="evidence" value="ECO:0007669"/>
    <property type="project" value="EnsemblFungi"/>
</dbReference>
<dbReference type="GO" id="GO:0005524">
    <property type="term" value="F:ATP binding"/>
    <property type="evidence" value="ECO:0007669"/>
    <property type="project" value="UniProtKB-UniRule"/>
</dbReference>
<dbReference type="GO" id="GO:0016887">
    <property type="term" value="F:ATP hydrolysis activity"/>
    <property type="evidence" value="ECO:0007669"/>
    <property type="project" value="EnsemblFungi"/>
</dbReference>
<dbReference type="GO" id="GO:0005085">
    <property type="term" value="F:guanyl-nucleotide exchange factor activity"/>
    <property type="evidence" value="ECO:0007669"/>
    <property type="project" value="EnsemblFungi"/>
</dbReference>
<dbReference type="GO" id="GO:0042802">
    <property type="term" value="F:identical protein binding"/>
    <property type="evidence" value="ECO:0007669"/>
    <property type="project" value="EnsemblFungi"/>
</dbReference>
<dbReference type="GO" id="GO:0046872">
    <property type="term" value="F:metal ion binding"/>
    <property type="evidence" value="ECO:0007669"/>
    <property type="project" value="UniProtKB-KW"/>
</dbReference>
<dbReference type="GO" id="GO:0044183">
    <property type="term" value="F:protein folding chaperone"/>
    <property type="evidence" value="ECO:0007669"/>
    <property type="project" value="EnsemblFungi"/>
</dbReference>
<dbReference type="GO" id="GO:0051082">
    <property type="term" value="F:unfolded protein binding"/>
    <property type="evidence" value="ECO:0007669"/>
    <property type="project" value="EnsemblFungi"/>
</dbReference>
<dbReference type="GO" id="GO:0034599">
    <property type="term" value="P:cellular response to oxidative stress"/>
    <property type="evidence" value="ECO:0007669"/>
    <property type="project" value="EnsemblFungi"/>
</dbReference>
<dbReference type="GO" id="GO:0000750">
    <property type="term" value="P:pheromone-dependent signal transduction involved in conjugation with cellular fusion"/>
    <property type="evidence" value="ECO:0007669"/>
    <property type="project" value="EnsemblFungi"/>
</dbReference>
<dbReference type="GO" id="GO:0006620">
    <property type="term" value="P:post-translational protein targeting to endoplasmic reticulum membrane"/>
    <property type="evidence" value="ECO:0007669"/>
    <property type="project" value="EnsemblFungi"/>
</dbReference>
<dbReference type="GO" id="GO:0009408">
    <property type="term" value="P:response to heat"/>
    <property type="evidence" value="ECO:0007669"/>
    <property type="project" value="EnsemblFungi"/>
</dbReference>
<dbReference type="GO" id="GO:0010038">
    <property type="term" value="P:response to metal ion"/>
    <property type="evidence" value="ECO:0007669"/>
    <property type="project" value="EnsemblFungi"/>
</dbReference>
<dbReference type="GO" id="GO:0006890">
    <property type="term" value="P:retrograde vesicle-mediated transport, Golgi to endoplasmic reticulum"/>
    <property type="evidence" value="ECO:0007669"/>
    <property type="project" value="EnsemblFungi"/>
</dbReference>
<dbReference type="GO" id="GO:0071816">
    <property type="term" value="P:tail-anchored membrane protein insertion into ER membrane"/>
    <property type="evidence" value="ECO:0007669"/>
    <property type="project" value="EnsemblFungi"/>
</dbReference>
<dbReference type="CDD" id="cd02035">
    <property type="entry name" value="ArsA"/>
    <property type="match status" value="1"/>
</dbReference>
<dbReference type="FunFam" id="3.40.50.300:FF:000235">
    <property type="entry name" value="ATPase ASNA1"/>
    <property type="match status" value="1"/>
</dbReference>
<dbReference type="Gene3D" id="3.40.50.300">
    <property type="entry name" value="P-loop containing nucleotide triphosphate hydrolases"/>
    <property type="match status" value="1"/>
</dbReference>
<dbReference type="HAMAP" id="MF_03112">
    <property type="entry name" value="Asna1_Get3"/>
    <property type="match status" value="1"/>
</dbReference>
<dbReference type="InterPro" id="IPR025723">
    <property type="entry name" value="Anion-transp_ATPase-like_dom"/>
</dbReference>
<dbReference type="InterPro" id="IPR016300">
    <property type="entry name" value="ATPase_ArsA/GET3"/>
</dbReference>
<dbReference type="InterPro" id="IPR027542">
    <property type="entry name" value="ATPase_ArsA/GET3_euk"/>
</dbReference>
<dbReference type="InterPro" id="IPR027417">
    <property type="entry name" value="P-loop_NTPase"/>
</dbReference>
<dbReference type="NCBIfam" id="TIGR00345">
    <property type="entry name" value="GET3_arsA_TRC40"/>
    <property type="match status" value="1"/>
</dbReference>
<dbReference type="PANTHER" id="PTHR10803">
    <property type="entry name" value="ARSENICAL PUMP-DRIVING ATPASE ARSENITE-TRANSLOCATING ATPASE"/>
    <property type="match status" value="1"/>
</dbReference>
<dbReference type="PANTHER" id="PTHR10803:SF3">
    <property type="entry name" value="ATPASE GET3"/>
    <property type="match status" value="1"/>
</dbReference>
<dbReference type="Pfam" id="PF02374">
    <property type="entry name" value="ArsA_ATPase"/>
    <property type="match status" value="1"/>
</dbReference>
<dbReference type="SUPFAM" id="SSF52540">
    <property type="entry name" value="P-loop containing nucleoside triphosphate hydrolases"/>
    <property type="match status" value="1"/>
</dbReference>
<organism>
    <name type="scientific">Aspergillus niger (strain ATCC MYA-4892 / CBS 513.88 / FGSC A1513)</name>
    <dbReference type="NCBI Taxonomy" id="425011"/>
    <lineage>
        <taxon>Eukaryota</taxon>
        <taxon>Fungi</taxon>
        <taxon>Dikarya</taxon>
        <taxon>Ascomycota</taxon>
        <taxon>Pezizomycotina</taxon>
        <taxon>Eurotiomycetes</taxon>
        <taxon>Eurotiomycetidae</taxon>
        <taxon>Eurotiales</taxon>
        <taxon>Aspergillaceae</taxon>
        <taxon>Aspergillus</taxon>
        <taxon>Aspergillus subgen. Circumdati</taxon>
    </lineage>
</organism>
<comment type="function">
    <text evidence="1">ATPase required for the post-translational delivery of tail-anchored (TA) proteins to the endoplasmic reticulum. Recognizes and selectively binds the transmembrane domain of TA proteins in the cytosol. This complex then targets to the endoplasmic reticulum by membrane-bound receptors, where the tail-anchored protein is released for insertion. This process is regulated by ATP binding and hydrolysis. ATP binding drives the homodimer towards the closed dimer state, facilitating recognition of newly synthesized TA membrane proteins. ATP hydrolysis is required for insertion. Subsequently, the homodimer reverts towards the open dimer state, lowering its affinity for the membrane-bound receptor, and returning it to the cytosol to initiate a new round of targeting.</text>
</comment>
<comment type="subunit">
    <text evidence="1">Homodimer.</text>
</comment>
<comment type="subcellular location">
    <subcellularLocation>
        <location evidence="1">Cytoplasm</location>
    </subcellularLocation>
    <subcellularLocation>
        <location evidence="1">Endoplasmic reticulum</location>
    </subcellularLocation>
</comment>
<comment type="similarity">
    <text evidence="1">Belongs to the arsA ATPase family.</text>
</comment>
<reference key="1">
    <citation type="journal article" date="2007" name="Nat. Biotechnol.">
        <title>Genome sequencing and analysis of the versatile cell factory Aspergillus niger CBS 513.88.</title>
        <authorList>
            <person name="Pel H.J."/>
            <person name="de Winde J.H."/>
            <person name="Archer D.B."/>
            <person name="Dyer P.S."/>
            <person name="Hofmann G."/>
            <person name="Schaap P.J."/>
            <person name="Turner G."/>
            <person name="de Vries R.P."/>
            <person name="Albang R."/>
            <person name="Albermann K."/>
            <person name="Andersen M.R."/>
            <person name="Bendtsen J.D."/>
            <person name="Benen J.A.E."/>
            <person name="van den Berg M."/>
            <person name="Breestraat S."/>
            <person name="Caddick M.X."/>
            <person name="Contreras R."/>
            <person name="Cornell M."/>
            <person name="Coutinho P.M."/>
            <person name="Danchin E.G.J."/>
            <person name="Debets A.J.M."/>
            <person name="Dekker P."/>
            <person name="van Dijck P.W.M."/>
            <person name="van Dijk A."/>
            <person name="Dijkhuizen L."/>
            <person name="Driessen A.J.M."/>
            <person name="d'Enfert C."/>
            <person name="Geysens S."/>
            <person name="Goosen C."/>
            <person name="Groot G.S.P."/>
            <person name="de Groot P.W.J."/>
            <person name="Guillemette T."/>
            <person name="Henrissat B."/>
            <person name="Herweijer M."/>
            <person name="van den Hombergh J.P.T.W."/>
            <person name="van den Hondel C.A.M.J.J."/>
            <person name="van der Heijden R.T.J.M."/>
            <person name="van der Kaaij R.M."/>
            <person name="Klis F.M."/>
            <person name="Kools H.J."/>
            <person name="Kubicek C.P."/>
            <person name="van Kuyk P.A."/>
            <person name="Lauber J."/>
            <person name="Lu X."/>
            <person name="van der Maarel M.J.E.C."/>
            <person name="Meulenberg R."/>
            <person name="Menke H."/>
            <person name="Mortimer M.A."/>
            <person name="Nielsen J."/>
            <person name="Oliver S.G."/>
            <person name="Olsthoorn M."/>
            <person name="Pal K."/>
            <person name="van Peij N.N.M.E."/>
            <person name="Ram A.F.J."/>
            <person name="Rinas U."/>
            <person name="Roubos J.A."/>
            <person name="Sagt C.M.J."/>
            <person name="Schmoll M."/>
            <person name="Sun J."/>
            <person name="Ussery D."/>
            <person name="Varga J."/>
            <person name="Vervecken W."/>
            <person name="van de Vondervoort P.J.J."/>
            <person name="Wedler H."/>
            <person name="Woesten H.A.B."/>
            <person name="Zeng A.-P."/>
            <person name="van Ooyen A.J.J."/>
            <person name="Visser J."/>
            <person name="Stam H."/>
        </authorList>
    </citation>
    <scope>NUCLEOTIDE SEQUENCE [LARGE SCALE GENOMIC DNA]</scope>
    <source>
        <strain>ATCC MYA-4892 / CBS 513.88 / FGSC A1513</strain>
    </source>
</reference>
<feature type="chain" id="PRO_0000388191" description="ATPase get3">
    <location>
        <begin position="1"/>
        <end position="341"/>
    </location>
</feature>
<feature type="active site" evidence="1">
    <location>
        <position position="62"/>
    </location>
</feature>
<feature type="binding site" evidence="1">
    <location>
        <begin position="33"/>
        <end position="40"/>
    </location>
    <ligand>
        <name>ATP</name>
        <dbReference type="ChEBI" id="CHEBI:30616"/>
    </ligand>
</feature>
<feature type="binding site" evidence="1">
    <location>
        <position position="244"/>
    </location>
    <ligand>
        <name>ATP</name>
        <dbReference type="ChEBI" id="CHEBI:30616"/>
    </ligand>
</feature>
<feature type="binding site" evidence="1">
    <location>
        <position position="271"/>
    </location>
    <ligand>
        <name>ATP</name>
        <dbReference type="ChEBI" id="CHEBI:30616"/>
    </ligand>
</feature>
<feature type="binding site" evidence="1">
    <location>
        <position position="282"/>
    </location>
    <ligand>
        <name>Zn(2+)</name>
        <dbReference type="ChEBI" id="CHEBI:29105"/>
        <note>ligand shared between dimeric partners</note>
    </ligand>
</feature>
<feature type="binding site" evidence="1">
    <location>
        <position position="285"/>
    </location>
    <ligand>
        <name>Zn(2+)</name>
        <dbReference type="ChEBI" id="CHEBI:29105"/>
        <note>ligand shared between dimeric partners</note>
    </ligand>
</feature>
<evidence type="ECO:0000255" key="1">
    <source>
        <dbReference type="HAMAP-Rule" id="MF_03112"/>
    </source>
</evidence>
<proteinExistence type="inferred from homology"/>
<protein>
    <recommendedName>
        <fullName evidence="1">ATPase get3</fullName>
        <ecNumber evidence="1">3.6.-.-</ecNumber>
    </recommendedName>
    <alternativeName>
        <fullName evidence="1">Arsenical pump-driving ATPase</fullName>
    </alternativeName>
    <alternativeName>
        <fullName evidence="1">Arsenite-stimulated ATPase</fullName>
    </alternativeName>
    <alternativeName>
        <fullName evidence="1">Golgi to ER traffic protein 3</fullName>
    </alternativeName>
    <alternativeName>
        <fullName evidence="1">Guided entry of tail-anchored proteins 3</fullName>
    </alternativeName>
</protein>